<comment type="function">
    <text evidence="1">Polymerase that creates the 3'-poly(A) tail of mRNA's.</text>
</comment>
<comment type="catalytic activity">
    <reaction evidence="1">
        <text>RNA(n) + ATP = RNA(n)-3'-adenine ribonucleotide + diphosphate</text>
        <dbReference type="Rhea" id="RHEA:11332"/>
        <dbReference type="Rhea" id="RHEA-COMP:14527"/>
        <dbReference type="Rhea" id="RHEA-COMP:17347"/>
        <dbReference type="ChEBI" id="CHEBI:30616"/>
        <dbReference type="ChEBI" id="CHEBI:33019"/>
        <dbReference type="ChEBI" id="CHEBI:140395"/>
        <dbReference type="ChEBI" id="CHEBI:173115"/>
        <dbReference type="EC" id="2.7.7.19"/>
    </reaction>
</comment>
<comment type="subunit">
    <text evidence="1">Heterodimer of a large (catalytic) subunit and a small (regulatory) subunit.</text>
</comment>
<comment type="induction">
    <text evidence="1">Expressed in the early phase of the viral replicative cycle.</text>
</comment>
<comment type="similarity">
    <text evidence="3">Belongs to the poxviridae poly(A) polymerase catalytic subunit family.</text>
</comment>
<proteinExistence type="inferred from homology"/>
<organismHost>
    <name type="scientific">Bos taurus</name>
    <name type="common">Bovine</name>
    <dbReference type="NCBI Taxonomy" id="9913"/>
</organismHost>
<organismHost>
    <name type="scientific">Equus caballus</name>
    <name type="common">Horse</name>
    <dbReference type="NCBI Taxonomy" id="9796"/>
</organismHost>
<organismHost>
    <name type="scientific">Homo sapiens</name>
    <name type="common">Human</name>
    <dbReference type="NCBI Taxonomy" id="9606"/>
</organismHost>
<evidence type="ECO:0000250" key="1">
    <source>
        <dbReference type="UniProtKB" id="P23371"/>
    </source>
</evidence>
<evidence type="ECO:0000255" key="2">
    <source>
        <dbReference type="PIRSR" id="PIRSR015693-50"/>
    </source>
</evidence>
<evidence type="ECO:0000305" key="3"/>
<organism>
    <name type="scientific">Horsepox virus</name>
    <name type="common">HSPV</name>
    <dbReference type="NCBI Taxonomy" id="397342"/>
    <lineage>
        <taxon>Viruses</taxon>
        <taxon>Varidnaviria</taxon>
        <taxon>Bamfordvirae</taxon>
        <taxon>Nucleocytoviricota</taxon>
        <taxon>Pokkesviricetes</taxon>
        <taxon>Chitovirales</taxon>
        <taxon>Poxviridae</taxon>
        <taxon>Chordopoxvirinae</taxon>
        <taxon>Orthopoxvirus</taxon>
        <taxon>Vaccinia virus</taxon>
    </lineage>
</organism>
<dbReference type="EC" id="2.7.7.19"/>
<dbReference type="EMBL" id="DQ792504">
    <property type="protein sequence ID" value="ABH08161.1"/>
    <property type="molecule type" value="Genomic_DNA"/>
</dbReference>
<dbReference type="RefSeq" id="YP_010509267.1">
    <property type="nucleotide sequence ID" value="NC_066642.1"/>
</dbReference>
<dbReference type="SMR" id="Q0GP30"/>
<dbReference type="GeneID" id="75279603"/>
<dbReference type="Proteomes" id="UP000111173">
    <property type="component" value="Genome"/>
</dbReference>
<dbReference type="GO" id="GO:0005524">
    <property type="term" value="F:ATP binding"/>
    <property type="evidence" value="ECO:0007669"/>
    <property type="project" value="UniProtKB-KW"/>
</dbReference>
<dbReference type="GO" id="GO:0046872">
    <property type="term" value="F:metal ion binding"/>
    <property type="evidence" value="ECO:0007669"/>
    <property type="project" value="UniProtKB-KW"/>
</dbReference>
<dbReference type="GO" id="GO:1990817">
    <property type="term" value="F:poly(A) RNA polymerase activity"/>
    <property type="evidence" value="ECO:0007669"/>
    <property type="project" value="UniProtKB-EC"/>
</dbReference>
<dbReference type="GO" id="GO:0006397">
    <property type="term" value="P:mRNA processing"/>
    <property type="evidence" value="ECO:0007669"/>
    <property type="project" value="UniProtKB-KW"/>
</dbReference>
<dbReference type="CDD" id="cd20919">
    <property type="entry name" value="polyA_pol_Pox"/>
    <property type="match status" value="1"/>
</dbReference>
<dbReference type="Gene3D" id="1.20.1270.320">
    <property type="entry name" value="Poxvirus poly(A) polymerase, N domain"/>
    <property type="match status" value="1"/>
</dbReference>
<dbReference type="Gene3D" id="3.30.460.60">
    <property type="entry name" value="Poxvirus poly(A) polymerase, nucleotidyltransferase domain"/>
    <property type="match status" value="1"/>
</dbReference>
<dbReference type="InterPro" id="IPR004976">
    <property type="entry name" value="PolyA_pol_cat_Poxvir"/>
</dbReference>
<dbReference type="InterPro" id="IPR037265">
    <property type="entry name" value="PolyA_pol_cat_sf"/>
</dbReference>
<dbReference type="InterPro" id="IPR024231">
    <property type="entry name" value="PolyA_pol_nucTrfase_Poxvir"/>
</dbReference>
<dbReference type="InterPro" id="IPR038419">
    <property type="entry name" value="PolyA_pol_nucTrfase_sf_Poxvir"/>
</dbReference>
<dbReference type="InterPro" id="IPR024397">
    <property type="entry name" value="Poxvirus_polyA_pol_cat_C"/>
</dbReference>
<dbReference type="InterPro" id="IPR024398">
    <property type="entry name" value="Poxvirus_polyA_pol_cat_N"/>
</dbReference>
<dbReference type="InterPro" id="IPR038337">
    <property type="entry name" value="Poxvirus_polyA_pol_cat_N_sf"/>
</dbReference>
<dbReference type="Pfam" id="PF03296">
    <property type="entry name" value="Pox_polyA_pol"/>
    <property type="match status" value="1"/>
</dbReference>
<dbReference type="Pfam" id="PF12629">
    <property type="entry name" value="Pox_polyA_pol_C"/>
    <property type="match status" value="1"/>
</dbReference>
<dbReference type="Pfam" id="PF12630">
    <property type="entry name" value="Pox_polyA_pol_N"/>
    <property type="match status" value="1"/>
</dbReference>
<dbReference type="PIRSF" id="PIRSF015693">
    <property type="entry name" value="VAC-48L_nuct"/>
    <property type="match status" value="1"/>
</dbReference>
<dbReference type="SUPFAM" id="SSF160957">
    <property type="entry name" value="Poly(A) polymerase catalytic subunit-like"/>
    <property type="match status" value="1"/>
</dbReference>
<feature type="chain" id="PRO_0000308933" description="Poly(A) polymerase catalytic subunit">
    <location>
        <begin position="1"/>
        <end position="479"/>
    </location>
</feature>
<feature type="active site" evidence="2">
    <location>
        <position position="202"/>
    </location>
</feature>
<feature type="active site" evidence="2">
    <location>
        <position position="204"/>
    </location>
</feature>
<feature type="binding site" evidence="1">
    <location>
        <position position="202"/>
    </location>
    <ligand>
        <name>Ca(2+)</name>
        <dbReference type="ChEBI" id="CHEBI:29108"/>
        <label>1</label>
    </ligand>
</feature>
<feature type="binding site" evidence="1">
    <location>
        <position position="202"/>
    </location>
    <ligand>
        <name>Ca(2+)</name>
        <dbReference type="ChEBI" id="CHEBI:29108"/>
        <label>2</label>
    </ligand>
</feature>
<feature type="binding site" evidence="1">
    <location>
        <position position="204"/>
    </location>
    <ligand>
        <name>Ca(2+)</name>
        <dbReference type="ChEBI" id="CHEBI:29108"/>
        <label>1</label>
    </ligand>
</feature>
<feature type="binding site" evidence="1">
    <location>
        <position position="204"/>
    </location>
    <ligand>
        <name>Ca(2+)</name>
        <dbReference type="ChEBI" id="CHEBI:29108"/>
        <label>2</label>
    </ligand>
</feature>
<feature type="binding site" evidence="1">
    <location>
        <position position="253"/>
    </location>
    <ligand>
        <name>Ca(2+)</name>
        <dbReference type="ChEBI" id="CHEBI:29108"/>
        <label>2</label>
    </ligand>
</feature>
<name>PAP1_HSPV</name>
<reference key="1">
    <citation type="journal article" date="2006" name="J. Virol.">
        <title>Genome of horsepox virus.</title>
        <authorList>
            <person name="Tulman E.R."/>
            <person name="Delhon G."/>
            <person name="Afonso C.L."/>
            <person name="Lu Z."/>
            <person name="Zsak L."/>
            <person name="Sandybaev N.T."/>
            <person name="Kerembekova U.Z."/>
            <person name="Zaitsev V.L."/>
            <person name="Kutish G.F."/>
            <person name="Rock D.L."/>
        </authorList>
    </citation>
    <scope>NUCLEOTIDE SEQUENCE [LARGE SCALE GENOMIC DNA]</scope>
    <source>
        <strain>MNR-76</strain>
    </source>
</reference>
<gene>
    <name type="primary">OPG063</name>
    <name type="synonym">PAPL</name>
    <name type="ordered locus">HSPV058</name>
</gene>
<keyword id="KW-0067">ATP-binding</keyword>
<keyword id="KW-0106">Calcium</keyword>
<keyword id="KW-0244">Early protein</keyword>
<keyword id="KW-0479">Metal-binding</keyword>
<keyword id="KW-0507">mRNA processing</keyword>
<keyword id="KW-0547">Nucleotide-binding</keyword>
<keyword id="KW-0804">Transcription</keyword>
<keyword id="KW-0808">Transferase</keyword>
<sequence length="479" mass="55566">MNRNPDQNTFPNITLKIIETYLSRVPSVNEYHMLKLQARNIQKITVFNKDIFVSLVKKNKKRFFSDVNTSASEIKDRILSYFSKQTQTYNIGKLFTIIELQSVLVTTYTDILGVLTIKAPNVISSKISYNVTSMEELARDMLNSMNVAIIDKAKVMGRHNVSSLVKNVNKLMEEYLRRHNKSCICYGSYSLYLINPNILYGDIDILQTNSRTFLIDLAFLIKFITGNNIILSKIPYLRNYMVIKDENDNHIIDSFNIRQDTMNVVPKIFIDNIYIVDPTFQLLNMIKMFSQIDRLEDLSKDPEKFNARMATMLEYVRYTHGIVFDGKRNNMPMKCIIDENNRIVTVTTKDYFSFKKCLVYLDENVLSSDILDLNADTSCDFESVTNSVYLIHDNIMYTYFSNTILLSDKGKVHEISARGLCAHILLYQMLTSGEYKQCLSDLLNSMMNRDKIPIYSHTERDKKPGRHGFINIEKDIIVF</sequence>
<accession>Q0GP30</accession>
<protein>
    <recommendedName>
        <fullName>Poly(A) polymerase catalytic subunit</fullName>
        <ecNumber>2.7.7.19</ecNumber>
    </recommendedName>
    <alternativeName>
        <fullName>Poly(A) polymerase large subunit</fullName>
        <shortName>PAP-L</shortName>
    </alternativeName>
</protein>